<comment type="function">
    <text evidence="1">Plays an important role in the de novo pathway of purine nucleotide biosynthesis. Catalyzes the first committed step in the biosynthesis of AMP from IMP.</text>
</comment>
<comment type="catalytic activity">
    <reaction evidence="1">
        <text>IMP + L-aspartate + GTP = N(6)-(1,2-dicarboxyethyl)-AMP + GDP + phosphate + 2 H(+)</text>
        <dbReference type="Rhea" id="RHEA:15753"/>
        <dbReference type="ChEBI" id="CHEBI:15378"/>
        <dbReference type="ChEBI" id="CHEBI:29991"/>
        <dbReference type="ChEBI" id="CHEBI:37565"/>
        <dbReference type="ChEBI" id="CHEBI:43474"/>
        <dbReference type="ChEBI" id="CHEBI:57567"/>
        <dbReference type="ChEBI" id="CHEBI:58053"/>
        <dbReference type="ChEBI" id="CHEBI:58189"/>
        <dbReference type="EC" id="6.3.4.4"/>
    </reaction>
</comment>
<comment type="cofactor">
    <cofactor evidence="1">
        <name>Mg(2+)</name>
        <dbReference type="ChEBI" id="CHEBI:18420"/>
    </cofactor>
    <text evidence="1">Binds 1 Mg(2+) ion per subunit.</text>
</comment>
<comment type="pathway">
    <text evidence="1">Purine metabolism; AMP biosynthesis via de novo pathway; AMP from IMP: step 1/2.</text>
</comment>
<comment type="subunit">
    <text evidence="1">Homodimer.</text>
</comment>
<comment type="subcellular location">
    <subcellularLocation>
        <location evidence="1">Cytoplasm</location>
    </subcellularLocation>
</comment>
<comment type="similarity">
    <text evidence="1">Belongs to the adenylosuccinate synthetase family.</text>
</comment>
<gene>
    <name evidence="1" type="primary">purA</name>
    <name type="ordered locus">Lm4b_00064</name>
</gene>
<keyword id="KW-0963">Cytoplasm</keyword>
<keyword id="KW-0342">GTP-binding</keyword>
<keyword id="KW-0436">Ligase</keyword>
<keyword id="KW-0460">Magnesium</keyword>
<keyword id="KW-0479">Metal-binding</keyword>
<keyword id="KW-0547">Nucleotide-binding</keyword>
<keyword id="KW-0658">Purine biosynthesis</keyword>
<evidence type="ECO:0000255" key="1">
    <source>
        <dbReference type="HAMAP-Rule" id="MF_00011"/>
    </source>
</evidence>
<accession>C1KV62</accession>
<dbReference type="EC" id="6.3.4.4" evidence="1"/>
<dbReference type="EMBL" id="FM242711">
    <property type="protein sequence ID" value="CAS03854.1"/>
    <property type="molecule type" value="Genomic_DNA"/>
</dbReference>
<dbReference type="RefSeq" id="WP_003724884.1">
    <property type="nucleotide sequence ID" value="NC_012488.1"/>
</dbReference>
<dbReference type="SMR" id="C1KV62"/>
<dbReference type="KEGG" id="lmc:Lm4b_00064"/>
<dbReference type="HOGENOM" id="CLU_029848_0_0_9"/>
<dbReference type="UniPathway" id="UPA00075">
    <property type="reaction ID" value="UER00335"/>
</dbReference>
<dbReference type="GO" id="GO:0005737">
    <property type="term" value="C:cytoplasm"/>
    <property type="evidence" value="ECO:0007669"/>
    <property type="project" value="UniProtKB-SubCell"/>
</dbReference>
<dbReference type="GO" id="GO:0004019">
    <property type="term" value="F:adenylosuccinate synthase activity"/>
    <property type="evidence" value="ECO:0007669"/>
    <property type="project" value="UniProtKB-UniRule"/>
</dbReference>
<dbReference type="GO" id="GO:0005525">
    <property type="term" value="F:GTP binding"/>
    <property type="evidence" value="ECO:0007669"/>
    <property type="project" value="UniProtKB-UniRule"/>
</dbReference>
<dbReference type="GO" id="GO:0000287">
    <property type="term" value="F:magnesium ion binding"/>
    <property type="evidence" value="ECO:0007669"/>
    <property type="project" value="UniProtKB-UniRule"/>
</dbReference>
<dbReference type="GO" id="GO:0044208">
    <property type="term" value="P:'de novo' AMP biosynthetic process"/>
    <property type="evidence" value="ECO:0007669"/>
    <property type="project" value="UniProtKB-UniRule"/>
</dbReference>
<dbReference type="GO" id="GO:0046040">
    <property type="term" value="P:IMP metabolic process"/>
    <property type="evidence" value="ECO:0007669"/>
    <property type="project" value="TreeGrafter"/>
</dbReference>
<dbReference type="CDD" id="cd03108">
    <property type="entry name" value="AdSS"/>
    <property type="match status" value="1"/>
</dbReference>
<dbReference type="FunFam" id="1.10.300.10:FF:000001">
    <property type="entry name" value="Adenylosuccinate synthetase"/>
    <property type="match status" value="1"/>
</dbReference>
<dbReference type="FunFam" id="3.90.170.10:FF:000001">
    <property type="entry name" value="Adenylosuccinate synthetase"/>
    <property type="match status" value="1"/>
</dbReference>
<dbReference type="Gene3D" id="3.40.440.10">
    <property type="entry name" value="Adenylosuccinate Synthetase, subunit A, domain 1"/>
    <property type="match status" value="1"/>
</dbReference>
<dbReference type="Gene3D" id="1.10.300.10">
    <property type="entry name" value="Adenylosuccinate Synthetase, subunit A, domain 2"/>
    <property type="match status" value="1"/>
</dbReference>
<dbReference type="Gene3D" id="3.90.170.10">
    <property type="entry name" value="Adenylosuccinate Synthetase, subunit A, domain 3"/>
    <property type="match status" value="1"/>
</dbReference>
<dbReference type="HAMAP" id="MF_00011">
    <property type="entry name" value="Adenylosucc_synth"/>
    <property type="match status" value="1"/>
</dbReference>
<dbReference type="InterPro" id="IPR018220">
    <property type="entry name" value="Adenylosuccin_syn_GTP-bd"/>
</dbReference>
<dbReference type="InterPro" id="IPR033128">
    <property type="entry name" value="Adenylosuccin_syn_Lys_AS"/>
</dbReference>
<dbReference type="InterPro" id="IPR042109">
    <property type="entry name" value="Adenylosuccinate_synth_dom1"/>
</dbReference>
<dbReference type="InterPro" id="IPR042110">
    <property type="entry name" value="Adenylosuccinate_synth_dom2"/>
</dbReference>
<dbReference type="InterPro" id="IPR042111">
    <property type="entry name" value="Adenylosuccinate_synth_dom3"/>
</dbReference>
<dbReference type="InterPro" id="IPR001114">
    <property type="entry name" value="Adenylosuccinate_synthetase"/>
</dbReference>
<dbReference type="InterPro" id="IPR027417">
    <property type="entry name" value="P-loop_NTPase"/>
</dbReference>
<dbReference type="NCBIfam" id="NF002223">
    <property type="entry name" value="PRK01117.1"/>
    <property type="match status" value="1"/>
</dbReference>
<dbReference type="NCBIfam" id="TIGR00184">
    <property type="entry name" value="purA"/>
    <property type="match status" value="1"/>
</dbReference>
<dbReference type="PANTHER" id="PTHR11846">
    <property type="entry name" value="ADENYLOSUCCINATE SYNTHETASE"/>
    <property type="match status" value="1"/>
</dbReference>
<dbReference type="PANTHER" id="PTHR11846:SF0">
    <property type="entry name" value="ADENYLOSUCCINATE SYNTHETASE"/>
    <property type="match status" value="1"/>
</dbReference>
<dbReference type="Pfam" id="PF00709">
    <property type="entry name" value="Adenylsucc_synt"/>
    <property type="match status" value="1"/>
</dbReference>
<dbReference type="SMART" id="SM00788">
    <property type="entry name" value="Adenylsucc_synt"/>
    <property type="match status" value="1"/>
</dbReference>
<dbReference type="SUPFAM" id="SSF52540">
    <property type="entry name" value="P-loop containing nucleoside triphosphate hydrolases"/>
    <property type="match status" value="1"/>
</dbReference>
<dbReference type="PROSITE" id="PS01266">
    <property type="entry name" value="ADENYLOSUCCIN_SYN_1"/>
    <property type="match status" value="1"/>
</dbReference>
<dbReference type="PROSITE" id="PS00513">
    <property type="entry name" value="ADENYLOSUCCIN_SYN_2"/>
    <property type="match status" value="1"/>
</dbReference>
<name>PURA_LISMC</name>
<feature type="chain" id="PRO_1000201760" description="Adenylosuccinate synthetase">
    <location>
        <begin position="1"/>
        <end position="430"/>
    </location>
</feature>
<feature type="active site" description="Proton acceptor" evidence="1">
    <location>
        <position position="13"/>
    </location>
</feature>
<feature type="active site" description="Proton donor" evidence="1">
    <location>
        <position position="41"/>
    </location>
</feature>
<feature type="binding site" evidence="1">
    <location>
        <begin position="12"/>
        <end position="18"/>
    </location>
    <ligand>
        <name>GTP</name>
        <dbReference type="ChEBI" id="CHEBI:37565"/>
    </ligand>
</feature>
<feature type="binding site" description="in other chain" evidence="1">
    <location>
        <begin position="13"/>
        <end position="16"/>
    </location>
    <ligand>
        <name>IMP</name>
        <dbReference type="ChEBI" id="CHEBI:58053"/>
        <note>ligand shared between dimeric partners</note>
    </ligand>
</feature>
<feature type="binding site" evidence="1">
    <location>
        <position position="13"/>
    </location>
    <ligand>
        <name>Mg(2+)</name>
        <dbReference type="ChEBI" id="CHEBI:18420"/>
    </ligand>
</feature>
<feature type="binding site" description="in other chain" evidence="1">
    <location>
        <begin position="38"/>
        <end position="41"/>
    </location>
    <ligand>
        <name>IMP</name>
        <dbReference type="ChEBI" id="CHEBI:58053"/>
        <note>ligand shared between dimeric partners</note>
    </ligand>
</feature>
<feature type="binding site" evidence="1">
    <location>
        <begin position="40"/>
        <end position="42"/>
    </location>
    <ligand>
        <name>GTP</name>
        <dbReference type="ChEBI" id="CHEBI:37565"/>
    </ligand>
</feature>
<feature type="binding site" evidence="1">
    <location>
        <position position="40"/>
    </location>
    <ligand>
        <name>Mg(2+)</name>
        <dbReference type="ChEBI" id="CHEBI:18420"/>
    </ligand>
</feature>
<feature type="binding site" description="in other chain" evidence="1">
    <location>
        <position position="128"/>
    </location>
    <ligand>
        <name>IMP</name>
        <dbReference type="ChEBI" id="CHEBI:58053"/>
        <note>ligand shared between dimeric partners</note>
    </ligand>
</feature>
<feature type="binding site" evidence="1">
    <location>
        <position position="142"/>
    </location>
    <ligand>
        <name>IMP</name>
        <dbReference type="ChEBI" id="CHEBI:58053"/>
        <note>ligand shared between dimeric partners</note>
    </ligand>
</feature>
<feature type="binding site" description="in other chain" evidence="1">
    <location>
        <position position="223"/>
    </location>
    <ligand>
        <name>IMP</name>
        <dbReference type="ChEBI" id="CHEBI:58053"/>
        <note>ligand shared between dimeric partners</note>
    </ligand>
</feature>
<feature type="binding site" description="in other chain" evidence="1">
    <location>
        <position position="238"/>
    </location>
    <ligand>
        <name>IMP</name>
        <dbReference type="ChEBI" id="CHEBI:58053"/>
        <note>ligand shared between dimeric partners</note>
    </ligand>
</feature>
<feature type="binding site" evidence="1">
    <location>
        <begin position="298"/>
        <end position="304"/>
    </location>
    <ligand>
        <name>substrate</name>
    </ligand>
</feature>
<feature type="binding site" description="in other chain" evidence="1">
    <location>
        <position position="302"/>
    </location>
    <ligand>
        <name>IMP</name>
        <dbReference type="ChEBI" id="CHEBI:58053"/>
        <note>ligand shared between dimeric partners</note>
    </ligand>
</feature>
<feature type="binding site" evidence="1">
    <location>
        <position position="304"/>
    </location>
    <ligand>
        <name>GTP</name>
        <dbReference type="ChEBI" id="CHEBI:37565"/>
    </ligand>
</feature>
<feature type="binding site" evidence="1">
    <location>
        <begin position="330"/>
        <end position="332"/>
    </location>
    <ligand>
        <name>GTP</name>
        <dbReference type="ChEBI" id="CHEBI:37565"/>
    </ligand>
</feature>
<feature type="binding site" evidence="1">
    <location>
        <begin position="412"/>
        <end position="414"/>
    </location>
    <ligand>
        <name>GTP</name>
        <dbReference type="ChEBI" id="CHEBI:37565"/>
    </ligand>
</feature>
<protein>
    <recommendedName>
        <fullName evidence="1">Adenylosuccinate synthetase</fullName>
        <shortName evidence="1">AMPSase</shortName>
        <shortName evidence="1">AdSS</shortName>
        <ecNumber evidence="1">6.3.4.4</ecNumber>
    </recommendedName>
    <alternativeName>
        <fullName evidence="1">IMP--aspartate ligase</fullName>
    </alternativeName>
</protein>
<proteinExistence type="inferred from homology"/>
<reference key="1">
    <citation type="journal article" date="2012" name="BMC Genomics">
        <title>Comparative genomics and transcriptomics of lineages I, II, and III strains of Listeria monocytogenes.</title>
        <authorList>
            <person name="Hain T."/>
            <person name="Ghai R."/>
            <person name="Billion A."/>
            <person name="Kuenne C.T."/>
            <person name="Steinweg C."/>
            <person name="Izar B."/>
            <person name="Mohamed W."/>
            <person name="Mraheil M."/>
            <person name="Domann E."/>
            <person name="Schaffrath S."/>
            <person name="Karst U."/>
            <person name="Goesmann A."/>
            <person name="Oehm S."/>
            <person name="Puhler A."/>
            <person name="Merkl R."/>
            <person name="Vorwerk S."/>
            <person name="Glaser P."/>
            <person name="Garrido P."/>
            <person name="Rusniok C."/>
            <person name="Buchrieser C."/>
            <person name="Goebel W."/>
            <person name="Chakraborty T."/>
        </authorList>
    </citation>
    <scope>NUCLEOTIDE SEQUENCE [LARGE SCALE GENOMIC DNA]</scope>
    <source>
        <strain>CLIP80459</strain>
    </source>
</reference>
<sequence>MSSVVVVGTQWGDEGKGKITDFLSENAEAIARYQGGNNAGHTIKFDGVTYKLHLIPSGIFYKEKISVIGNGMVVDPKALVEELKYLHDKGVDTSNLRISNRAHIILPYHIRIDEADEERKGANKIGTTKKGIGPAYMDKAARVGIRIIDLLDKETFKEKLEHNLGEKNRLLERFYELEGFKLEDILEEYYDYGQQFKEYVCDTSVVLNDALDDGKRVLFEGAQGVMLDIDQGTYPFVTSSNPIAGGVTIGSGVGPSKINHVVGVAKAYTTRVGDGPFPTELFDTIGDTIREVGHEYGTTTGRPRRVGWFDSVVVRHARRVSGLTDLSLTLLDVLTGIETLKICVAYKLDGKTITEFPASLKDLARCEPVYEELPGWTEDITGVTSLDDLPVNCRHYMERIAQLTGVQVSMFSVGPDRAQTHVIKSVWRLA</sequence>
<organism>
    <name type="scientific">Listeria monocytogenes serotype 4b (strain CLIP80459)</name>
    <dbReference type="NCBI Taxonomy" id="568819"/>
    <lineage>
        <taxon>Bacteria</taxon>
        <taxon>Bacillati</taxon>
        <taxon>Bacillota</taxon>
        <taxon>Bacilli</taxon>
        <taxon>Bacillales</taxon>
        <taxon>Listeriaceae</taxon>
        <taxon>Listeria</taxon>
    </lineage>
</organism>